<proteinExistence type="evidence at protein level"/>
<sequence length="761" mass="85939">MIVKCPICDGTGKKVVKYKTCPVCEGTGFIDEFSPKQHMKRVSKRATYDLDYGEIPCPKCKGTGKVPVYAKCDFCGGSGKVVKCDRCGAIIGKYPDFKDRTLCDKCLKEEEERKKGLRNVYVFDELATFYDVEPGKFYKGVVTRIEKYGAFINLNEQVRGLLRPRDMISLRLENLNVGDEIIVQAIDVRPEKREIDFKYIPLTTYDLVKYEKEVPLSQIKDISQNLVEMRDQVVHIRGEVVQIVQTPGPTVFTITDGTDFAWVAALEIAGLRAHPDVKVGDIVDVIGRVTIRDGRLQIERIKLQKLEGDEAEEIRKKIEEEIDRRAEPAKDIPFLVKSEVLERLRPKMADVAKRIRKAVLDGRPIIIRHHADTDGYCGGIALEKAILPIIDKFAIDVDAIWHFFKRRPSKAPFYELEDVTKDLVFSIEDALKFGQKLPLIVLIDNGSTDEDIPAISKAKAYGIEVIVIDHHFPGEVVDGKVEVDDYVDAHVNPYLVGGDSNLTAGVLGTEIARMINPDVEDEIKHIPGIAVVGDHAKGEEAEQYVKIALDRLNELSKKYGKGRTYDREYLEKIALCMDFEAFYLRFMDGKGIVDDILATNIKEFGRHEELIDILYEQAMKMVERQMKAVIPALKTEFLENGIILNTLDVEKYAHKFTFPAPGKTTGFAHDYIVQKYGEDKPIITLSYGPDFGVVRATDAVHEKYNFNLNLIVEQLMEEIPEASLDGGGHECAGSLKFVEGLRDKVIGRFIEIIKNMKPKEQ</sequence>
<organism>
    <name type="scientific">Methanocaldococcus jannaschii (strain ATCC 43067 / DSM 2661 / JAL-1 / JCM 10045 / NBRC 100440)</name>
    <name type="common">Methanococcus jannaschii</name>
    <dbReference type="NCBI Taxonomy" id="243232"/>
    <lineage>
        <taxon>Archaea</taxon>
        <taxon>Methanobacteriati</taxon>
        <taxon>Methanobacteriota</taxon>
        <taxon>Methanomada group</taxon>
        <taxon>Methanococci</taxon>
        <taxon>Methanococcales</taxon>
        <taxon>Methanocaldococcaceae</taxon>
        <taxon>Methanocaldococcus</taxon>
    </lineage>
</organism>
<accession>Q58598</accession>
<gene>
    <name type="ordered locus">MJ1198</name>
</gene>
<dbReference type="EMBL" id="L77117">
    <property type="protein sequence ID" value="AAB99202.1"/>
    <property type="molecule type" value="Genomic_DNA"/>
</dbReference>
<dbReference type="PIR" id="E64449">
    <property type="entry name" value="E64449"/>
</dbReference>
<dbReference type="RefSeq" id="WP_010870710.1">
    <property type="nucleotide sequence ID" value="NC_000909.1"/>
</dbReference>
<dbReference type="PDB" id="2K52">
    <property type="method" value="NMR"/>
    <property type="chains" value="A=131-202"/>
</dbReference>
<dbReference type="PDBsum" id="2K52"/>
<dbReference type="BMRB" id="Q58598"/>
<dbReference type="SMR" id="Q58598"/>
<dbReference type="FunCoup" id="Q58598">
    <property type="interactions" value="1"/>
</dbReference>
<dbReference type="STRING" id="243232.MJ_1198"/>
<dbReference type="PaxDb" id="243232-MJ_1198"/>
<dbReference type="EnsemblBacteria" id="AAB99202">
    <property type="protein sequence ID" value="AAB99202"/>
    <property type="gene ID" value="MJ_1198"/>
</dbReference>
<dbReference type="GeneID" id="1452093"/>
<dbReference type="KEGG" id="mja:MJ_1198"/>
<dbReference type="eggNOG" id="arCOG00429">
    <property type="taxonomic scope" value="Archaea"/>
</dbReference>
<dbReference type="HOGENOM" id="CLU_018957_0_0_2"/>
<dbReference type="InParanoid" id="Q58598"/>
<dbReference type="OrthoDB" id="5596at2157"/>
<dbReference type="PhylomeDB" id="Q58598"/>
<dbReference type="EvolutionaryTrace" id="Q58598"/>
<dbReference type="Proteomes" id="UP000000805">
    <property type="component" value="Chromosome"/>
</dbReference>
<dbReference type="GO" id="GO:0031072">
    <property type="term" value="F:heat shock protein binding"/>
    <property type="evidence" value="ECO:0007669"/>
    <property type="project" value="InterPro"/>
</dbReference>
<dbReference type="GO" id="GO:0003676">
    <property type="term" value="F:nucleic acid binding"/>
    <property type="evidence" value="ECO:0007669"/>
    <property type="project" value="InterPro"/>
</dbReference>
<dbReference type="GO" id="GO:0051082">
    <property type="term" value="F:unfolded protein binding"/>
    <property type="evidence" value="ECO:0007669"/>
    <property type="project" value="InterPro"/>
</dbReference>
<dbReference type="GO" id="GO:0008270">
    <property type="term" value="F:zinc ion binding"/>
    <property type="evidence" value="ECO:0007669"/>
    <property type="project" value="UniProtKB-KW"/>
</dbReference>
<dbReference type="CDD" id="cd10719">
    <property type="entry name" value="DnaJ_zf"/>
    <property type="match status" value="1"/>
</dbReference>
<dbReference type="CDD" id="cd04487">
    <property type="entry name" value="RecJ_OBF2_like"/>
    <property type="match status" value="1"/>
</dbReference>
<dbReference type="CDD" id="cd04473">
    <property type="entry name" value="S1_RecJ_like"/>
    <property type="match status" value="1"/>
</dbReference>
<dbReference type="Gene3D" id="3.90.1640.30">
    <property type="match status" value="1"/>
</dbReference>
<dbReference type="Gene3D" id="6.20.20.10">
    <property type="match status" value="2"/>
</dbReference>
<dbReference type="Gene3D" id="2.40.50.140">
    <property type="entry name" value="Nucleic acid-binding proteins"/>
    <property type="match status" value="2"/>
</dbReference>
<dbReference type="InterPro" id="IPR001667">
    <property type="entry name" value="DDH_dom"/>
</dbReference>
<dbReference type="InterPro" id="IPR038763">
    <property type="entry name" value="DHH_sf"/>
</dbReference>
<dbReference type="InterPro" id="IPR001305">
    <property type="entry name" value="HSP_DnaJ_Cys-rich_dom"/>
</dbReference>
<dbReference type="InterPro" id="IPR036410">
    <property type="entry name" value="HSP_DnaJ_Cys-rich_dom_sf"/>
</dbReference>
<dbReference type="InterPro" id="IPR012340">
    <property type="entry name" value="NA-bd_OB-fold"/>
</dbReference>
<dbReference type="InterPro" id="IPR004365">
    <property type="entry name" value="NA-bd_OB_tRNA"/>
</dbReference>
<dbReference type="InterPro" id="IPR003029">
    <property type="entry name" value="S1_domain"/>
</dbReference>
<dbReference type="Pfam" id="PF01368">
    <property type="entry name" value="DHH"/>
    <property type="match status" value="1"/>
</dbReference>
<dbReference type="Pfam" id="PF00575">
    <property type="entry name" value="S1"/>
    <property type="match status" value="1"/>
</dbReference>
<dbReference type="Pfam" id="PF01336">
    <property type="entry name" value="tRNA_anti-codon"/>
    <property type="match status" value="1"/>
</dbReference>
<dbReference type="SMART" id="SM00316">
    <property type="entry name" value="S1"/>
    <property type="match status" value="1"/>
</dbReference>
<dbReference type="SUPFAM" id="SSF64182">
    <property type="entry name" value="DHH phosphoesterases"/>
    <property type="match status" value="1"/>
</dbReference>
<dbReference type="SUPFAM" id="SSF57938">
    <property type="entry name" value="DnaJ/Hsp40 cysteine-rich domain"/>
    <property type="match status" value="1"/>
</dbReference>
<dbReference type="SUPFAM" id="SSF50249">
    <property type="entry name" value="Nucleic acid-binding proteins"/>
    <property type="match status" value="2"/>
</dbReference>
<dbReference type="PROSITE" id="PS50126">
    <property type="entry name" value="S1"/>
    <property type="match status" value="1"/>
</dbReference>
<dbReference type="PROSITE" id="PS51188">
    <property type="entry name" value="ZF_CR"/>
    <property type="match status" value="1"/>
</dbReference>
<evidence type="ECO:0000255" key="1">
    <source>
        <dbReference type="PROSITE-ProRule" id="PRU00180"/>
    </source>
</evidence>
<evidence type="ECO:0000255" key="2">
    <source>
        <dbReference type="PROSITE-ProRule" id="PRU00546"/>
    </source>
</evidence>
<evidence type="ECO:0007829" key="3">
    <source>
        <dbReference type="PDB" id="2K52"/>
    </source>
</evidence>
<feature type="chain" id="PRO_0000107211" description="Uncharacterized protein MJ1198">
    <location>
        <begin position="1"/>
        <end position="761"/>
    </location>
</feature>
<feature type="domain" description="S1 motif" evidence="1">
    <location>
        <begin position="135"/>
        <end position="200"/>
    </location>
</feature>
<feature type="zinc finger region" description="CR-type" evidence="2">
    <location>
        <begin position="1"/>
        <end position="84"/>
    </location>
</feature>
<feature type="strand" evidence="3">
    <location>
        <begin position="137"/>
        <end position="146"/>
    </location>
</feature>
<feature type="strand" evidence="3">
    <location>
        <begin position="149"/>
        <end position="155"/>
    </location>
</feature>
<feature type="strand" evidence="3">
    <location>
        <begin position="158"/>
        <end position="162"/>
    </location>
</feature>
<feature type="helix" evidence="3">
    <location>
        <begin position="164"/>
        <end position="166"/>
    </location>
</feature>
<feature type="helix" evidence="3">
    <location>
        <begin position="172"/>
        <end position="174"/>
    </location>
</feature>
<feature type="strand" evidence="3">
    <location>
        <begin position="180"/>
        <end position="188"/>
    </location>
</feature>
<feature type="turn" evidence="3">
    <location>
        <begin position="190"/>
        <end position="192"/>
    </location>
</feature>
<feature type="strand" evidence="3">
    <location>
        <begin position="194"/>
        <end position="199"/>
    </location>
</feature>
<reference key="1">
    <citation type="journal article" date="1996" name="Science">
        <title>Complete genome sequence of the methanogenic archaeon, Methanococcus jannaschii.</title>
        <authorList>
            <person name="Bult C.J."/>
            <person name="White O."/>
            <person name="Olsen G.J."/>
            <person name="Zhou L."/>
            <person name="Fleischmann R.D."/>
            <person name="Sutton G.G."/>
            <person name="Blake J.A."/>
            <person name="FitzGerald L.M."/>
            <person name="Clayton R.A."/>
            <person name="Gocayne J.D."/>
            <person name="Kerlavage A.R."/>
            <person name="Dougherty B.A."/>
            <person name="Tomb J.-F."/>
            <person name="Adams M.D."/>
            <person name="Reich C.I."/>
            <person name="Overbeek R."/>
            <person name="Kirkness E.F."/>
            <person name="Weinstock K.G."/>
            <person name="Merrick J.M."/>
            <person name="Glodek A."/>
            <person name="Scott J.L."/>
            <person name="Geoghagen N.S.M."/>
            <person name="Weidman J.F."/>
            <person name="Fuhrmann J.L."/>
            <person name="Nguyen D."/>
            <person name="Utterback T.R."/>
            <person name="Kelley J.M."/>
            <person name="Peterson J.D."/>
            <person name="Sadow P.W."/>
            <person name="Hanna M.C."/>
            <person name="Cotton M.D."/>
            <person name="Roberts K.M."/>
            <person name="Hurst M.A."/>
            <person name="Kaine B.P."/>
            <person name="Borodovsky M."/>
            <person name="Klenk H.-P."/>
            <person name="Fraser C.M."/>
            <person name="Smith H.O."/>
            <person name="Woese C.R."/>
            <person name="Venter J.C."/>
        </authorList>
    </citation>
    <scope>NUCLEOTIDE SEQUENCE [LARGE SCALE GENOMIC DNA]</scope>
    <source>
        <strain>ATCC 43067 / DSM 2661 / JAL-1 / JCM 10045 / NBRC 100440</strain>
    </source>
</reference>
<name>Y1198_METJA</name>
<keyword id="KW-0002">3D-structure</keyword>
<keyword id="KW-0479">Metal-binding</keyword>
<keyword id="KW-1185">Reference proteome</keyword>
<keyword id="KW-0862">Zinc</keyword>
<keyword id="KW-0863">Zinc-finger</keyword>
<protein>
    <recommendedName>
        <fullName>Uncharacterized protein MJ1198</fullName>
    </recommendedName>
</protein>